<dbReference type="EMBL" id="CU928179">
    <property type="protein sequence ID" value="CAR29914.1"/>
    <property type="molecule type" value="Genomic_DNA"/>
</dbReference>
<dbReference type="RefSeq" id="XP_002498847.1">
    <property type="nucleotide sequence ID" value="XM_002498802.1"/>
</dbReference>
<dbReference type="SMR" id="C5E1D0"/>
<dbReference type="FunCoup" id="C5E1D0">
    <property type="interactions" value="121"/>
</dbReference>
<dbReference type="STRING" id="559307.C5E1D0"/>
<dbReference type="GeneID" id="8206681"/>
<dbReference type="KEGG" id="zro:ZYRO0G19998g"/>
<dbReference type="HOGENOM" id="CLU_1129832_0_0_1"/>
<dbReference type="InParanoid" id="C5E1D0"/>
<dbReference type="Proteomes" id="UP000008536">
    <property type="component" value="Chromosome G"/>
</dbReference>
<dbReference type="GO" id="GO:0005737">
    <property type="term" value="C:cytoplasm"/>
    <property type="evidence" value="ECO:0007669"/>
    <property type="project" value="UniProtKB-SubCell"/>
</dbReference>
<dbReference type="GO" id="GO:0005634">
    <property type="term" value="C:nucleus"/>
    <property type="evidence" value="ECO:0007669"/>
    <property type="project" value="UniProtKB-SubCell"/>
</dbReference>
<dbReference type="GO" id="GO:0003723">
    <property type="term" value="F:RNA binding"/>
    <property type="evidence" value="ECO:0007669"/>
    <property type="project" value="UniProtKB-KW"/>
</dbReference>
<dbReference type="GO" id="GO:0051028">
    <property type="term" value="P:mRNA transport"/>
    <property type="evidence" value="ECO:0007669"/>
    <property type="project" value="UniProtKB-KW"/>
</dbReference>
<dbReference type="Gene3D" id="1.20.200.20">
    <property type="entry name" value="She2 domain"/>
    <property type="match status" value="1"/>
</dbReference>
<dbReference type="InterPro" id="IPR024261">
    <property type="entry name" value="RNA-bd_She2"/>
</dbReference>
<dbReference type="InterPro" id="IPR036827">
    <property type="entry name" value="She2_dom_sf"/>
</dbReference>
<dbReference type="Pfam" id="PF11435">
    <property type="entry name" value="She2p"/>
    <property type="match status" value="1"/>
</dbReference>
<dbReference type="SUPFAM" id="SSF116942">
    <property type="entry name" value="RNA-binding protein She2p"/>
    <property type="match status" value="1"/>
</dbReference>
<keyword id="KW-0963">Cytoplasm</keyword>
<keyword id="KW-0509">mRNA transport</keyword>
<keyword id="KW-0539">Nucleus</keyword>
<keyword id="KW-1185">Reference proteome</keyword>
<keyword id="KW-0694">RNA-binding</keyword>
<keyword id="KW-0813">Transport</keyword>
<sequence length="269" mass="31619">MRSRRTLQNKVYNELDSTRFRNQLIPESSRSTMLELTPEVLSILKEHTEVFSKYLSCYIHALNKFIGFLRKASSLRFERTVLIKYVKKLRFINDSLIAYNFEAEFPDPNNTHLDEAVKPLASFLLKSIELLDLLNYFLTQPLQKEIISKTLNSDLNLSGECIVAIEDTYNHFVKFAQWMIESLQIENTFFQIEVVQFTRKCAIEDGVDLENTDNIFLQQVVPVTDTEEYEVIAEEWAHILADKTLQLETKFNENVINWQNKFDKKKEDK</sequence>
<name>SHE2_ZYGRC</name>
<evidence type="ECO:0000250" key="1"/>
<evidence type="ECO:0000250" key="2">
    <source>
        <dbReference type="UniProtKB" id="P36068"/>
    </source>
</evidence>
<evidence type="ECO:0000305" key="3"/>
<reference key="1">
    <citation type="journal article" date="2009" name="Genome Res.">
        <title>Comparative genomics of protoploid Saccharomycetaceae.</title>
        <authorList>
            <consortium name="The Genolevures Consortium"/>
            <person name="Souciet J.-L."/>
            <person name="Dujon B."/>
            <person name="Gaillardin C."/>
            <person name="Johnston M."/>
            <person name="Baret P.V."/>
            <person name="Cliften P."/>
            <person name="Sherman D.J."/>
            <person name="Weissenbach J."/>
            <person name="Westhof E."/>
            <person name="Wincker P."/>
            <person name="Jubin C."/>
            <person name="Poulain J."/>
            <person name="Barbe V."/>
            <person name="Segurens B."/>
            <person name="Artiguenave F."/>
            <person name="Anthouard V."/>
            <person name="Vacherie B."/>
            <person name="Val M.-E."/>
            <person name="Fulton R.S."/>
            <person name="Minx P."/>
            <person name="Wilson R."/>
            <person name="Durrens P."/>
            <person name="Jean G."/>
            <person name="Marck C."/>
            <person name="Martin T."/>
            <person name="Nikolski M."/>
            <person name="Rolland T."/>
            <person name="Seret M.-L."/>
            <person name="Casaregola S."/>
            <person name="Despons L."/>
            <person name="Fairhead C."/>
            <person name="Fischer G."/>
            <person name="Lafontaine I."/>
            <person name="Leh V."/>
            <person name="Lemaire M."/>
            <person name="de Montigny J."/>
            <person name="Neuveglise C."/>
            <person name="Thierry A."/>
            <person name="Blanc-Lenfle I."/>
            <person name="Bleykasten C."/>
            <person name="Diffels J."/>
            <person name="Fritsch E."/>
            <person name="Frangeul L."/>
            <person name="Goeffon A."/>
            <person name="Jauniaux N."/>
            <person name="Kachouri-Lafond R."/>
            <person name="Payen C."/>
            <person name="Potier S."/>
            <person name="Pribylova L."/>
            <person name="Ozanne C."/>
            <person name="Richard G.-F."/>
            <person name="Sacerdot C."/>
            <person name="Straub M.-L."/>
            <person name="Talla E."/>
        </authorList>
    </citation>
    <scope>NUCLEOTIDE SEQUENCE [LARGE SCALE GENOMIC DNA]</scope>
    <source>
        <strain>ATCC 2623 / CBS 732 / BCRC 21506 / NBRC 1130 / NCYC 568 / NRRL Y-229</strain>
    </source>
</reference>
<comment type="function">
    <text evidence="1">RNA-binding protein that binds specific mRNAs including the ASH1 mRNA, coding for a repressor of the HO endonuclease. Part of the mRNA localization machinery that restricts accumulation of certain proteins to the bud and in the daughter cell (By similarity).</text>
</comment>
<comment type="subunit">
    <text evidence="1">Homodimer and homotetramer.</text>
</comment>
<comment type="subcellular location">
    <subcellularLocation>
        <location evidence="2">Cytoplasm</location>
    </subcellularLocation>
    <subcellularLocation>
        <location evidence="2">Nucleus</location>
    </subcellularLocation>
    <text evidence="2">Shuttles between the nucleus and cytoplasm and is exported in an mRNA-dependent manner. The presence in the nucleus is essential for PUF6 and LOC1 to bind the ASH1 mRNA.</text>
</comment>
<comment type="similarity">
    <text evidence="3">Belongs to the SHE2 family.</text>
</comment>
<proteinExistence type="inferred from homology"/>
<protein>
    <recommendedName>
        <fullName>SWI5-dependent HO expression protein 2</fullName>
    </recommendedName>
</protein>
<accession>C5E1D0</accession>
<gene>
    <name type="primary">SHE2</name>
    <name type="ordered locus">ZYRO0G19998g</name>
</gene>
<organism>
    <name type="scientific">Zygosaccharomyces rouxii (strain ATCC 2623 / CBS 732 / NBRC 1130 / NCYC 568 / NRRL Y-229)</name>
    <dbReference type="NCBI Taxonomy" id="559307"/>
    <lineage>
        <taxon>Eukaryota</taxon>
        <taxon>Fungi</taxon>
        <taxon>Dikarya</taxon>
        <taxon>Ascomycota</taxon>
        <taxon>Saccharomycotina</taxon>
        <taxon>Saccharomycetes</taxon>
        <taxon>Saccharomycetales</taxon>
        <taxon>Saccharomycetaceae</taxon>
        <taxon>Zygosaccharomyces</taxon>
    </lineage>
</organism>
<feature type="chain" id="PRO_0000408926" description="SWI5-dependent HO expression protein 2">
    <location>
        <begin position="1"/>
        <end position="269"/>
    </location>
</feature>